<protein>
    <recommendedName>
        <fullName>Zinc finger protein 793</fullName>
    </recommendedName>
</protein>
<dbReference type="EMBL" id="AK131417">
    <property type="protein sequence ID" value="BAD18564.1"/>
    <property type="molecule type" value="mRNA"/>
</dbReference>
<dbReference type="EMBL" id="AC022148">
    <property type="status" value="NOT_ANNOTATED_CDS"/>
    <property type="molecule type" value="Genomic_DNA"/>
</dbReference>
<dbReference type="EMBL" id="BX537524">
    <property type="protein sequence ID" value="CAD97772.1"/>
    <property type="status" value="ALT_FRAME"/>
    <property type="molecule type" value="mRNA"/>
</dbReference>
<dbReference type="CCDS" id="CCDS46062.1">
    <molecule id="Q6ZN11-1"/>
</dbReference>
<dbReference type="RefSeq" id="NP_001013681.2">
    <molecule id="Q6ZN11-1"/>
    <property type="nucleotide sequence ID" value="NM_001013659.3"/>
</dbReference>
<dbReference type="RefSeq" id="XP_005258984.1">
    <property type="nucleotide sequence ID" value="XM_005258927.3"/>
</dbReference>
<dbReference type="RefSeq" id="XP_006723276.1">
    <molecule id="Q6ZN11-1"/>
    <property type="nucleotide sequence ID" value="XM_006723213.4"/>
</dbReference>
<dbReference type="RefSeq" id="XP_047294769.1">
    <molecule id="Q6ZN11-1"/>
    <property type="nucleotide sequence ID" value="XM_047438813.1"/>
</dbReference>
<dbReference type="RefSeq" id="XP_047294770.1">
    <molecule id="Q6ZN11-1"/>
    <property type="nucleotide sequence ID" value="XM_047438814.1"/>
</dbReference>
<dbReference type="RefSeq" id="XP_047294771.1">
    <molecule id="Q6ZN11-1"/>
    <property type="nucleotide sequence ID" value="XM_047438815.1"/>
</dbReference>
<dbReference type="RefSeq" id="XP_047294772.1">
    <molecule id="Q6ZN11-1"/>
    <property type="nucleotide sequence ID" value="XM_047438816.1"/>
</dbReference>
<dbReference type="RefSeq" id="XP_047294773.1">
    <molecule id="Q6ZN11-1"/>
    <property type="nucleotide sequence ID" value="XM_047438817.1"/>
</dbReference>
<dbReference type="RefSeq" id="XP_047294774.1">
    <molecule id="Q6ZN11-1"/>
    <property type="nucleotide sequence ID" value="XM_047438818.1"/>
</dbReference>
<dbReference type="RefSeq" id="XP_047294775.1">
    <molecule id="Q6ZN11-1"/>
    <property type="nucleotide sequence ID" value="XM_047438819.1"/>
</dbReference>
<dbReference type="RefSeq" id="XP_047294776.1">
    <molecule id="Q6ZN11-1"/>
    <property type="nucleotide sequence ID" value="XM_047438820.1"/>
</dbReference>
<dbReference type="RefSeq" id="XP_047294777.1">
    <molecule id="Q6ZN11-1"/>
    <property type="nucleotide sequence ID" value="XM_047438821.1"/>
</dbReference>
<dbReference type="RefSeq" id="XP_047294779.1">
    <molecule id="Q6ZN11-3"/>
    <property type="nucleotide sequence ID" value="XM_047438823.1"/>
</dbReference>
<dbReference type="RefSeq" id="XP_054176964.1">
    <molecule id="Q6ZN11-1"/>
    <property type="nucleotide sequence ID" value="XM_054320989.1"/>
</dbReference>
<dbReference type="RefSeq" id="XP_054176965.1">
    <molecule id="Q6ZN11-1"/>
    <property type="nucleotide sequence ID" value="XM_054320990.1"/>
</dbReference>
<dbReference type="RefSeq" id="XP_054176966.1">
    <molecule id="Q6ZN11-1"/>
    <property type="nucleotide sequence ID" value="XM_054320991.1"/>
</dbReference>
<dbReference type="RefSeq" id="XP_054176967.1">
    <molecule id="Q6ZN11-1"/>
    <property type="nucleotide sequence ID" value="XM_054320992.1"/>
</dbReference>
<dbReference type="RefSeq" id="XP_054176968.1">
    <molecule id="Q6ZN11-1"/>
    <property type="nucleotide sequence ID" value="XM_054320993.1"/>
</dbReference>
<dbReference type="RefSeq" id="XP_054176969.1">
    <molecule id="Q6ZN11-1"/>
    <property type="nucleotide sequence ID" value="XM_054320994.1"/>
</dbReference>
<dbReference type="RefSeq" id="XP_054176970.1">
    <molecule id="Q6ZN11-1"/>
    <property type="nucleotide sequence ID" value="XM_054320995.1"/>
</dbReference>
<dbReference type="RefSeq" id="XP_054176971.1">
    <molecule id="Q6ZN11-1"/>
    <property type="nucleotide sequence ID" value="XM_054320996.1"/>
</dbReference>
<dbReference type="RefSeq" id="XP_054176972.1">
    <molecule id="Q6ZN11-1"/>
    <property type="nucleotide sequence ID" value="XM_054320997.1"/>
</dbReference>
<dbReference type="RefSeq" id="XP_054176973.1">
    <molecule id="Q6ZN11-1"/>
    <property type="nucleotide sequence ID" value="XM_054320998.1"/>
</dbReference>
<dbReference type="RefSeq" id="XP_054176975.1">
    <molecule id="Q6ZN11-3"/>
    <property type="nucleotide sequence ID" value="XM_054321000.1"/>
</dbReference>
<dbReference type="SMR" id="Q6ZN11"/>
<dbReference type="BioGRID" id="133738">
    <property type="interactions" value="7"/>
</dbReference>
<dbReference type="FunCoup" id="Q6ZN11">
    <property type="interactions" value="4"/>
</dbReference>
<dbReference type="IntAct" id="Q6ZN11">
    <property type="interactions" value="19"/>
</dbReference>
<dbReference type="MINT" id="Q6ZN11"/>
<dbReference type="STRING" id="9606.ENSP00000487183"/>
<dbReference type="GlyGen" id="Q6ZN11">
    <property type="glycosylation" value="1 site, 1 O-linked glycan (1 site)"/>
</dbReference>
<dbReference type="iPTMnet" id="Q6ZN11"/>
<dbReference type="PhosphoSitePlus" id="Q6ZN11"/>
<dbReference type="BioMuta" id="ZNF793"/>
<dbReference type="DMDM" id="527504072"/>
<dbReference type="jPOST" id="Q6ZN11"/>
<dbReference type="MassIVE" id="Q6ZN11"/>
<dbReference type="PaxDb" id="9606-ENSP00000396402"/>
<dbReference type="PeptideAtlas" id="Q6ZN11"/>
<dbReference type="ProteomicsDB" id="20354"/>
<dbReference type="ProteomicsDB" id="67954">
    <molecule id="Q6ZN11-1"/>
</dbReference>
<dbReference type="ProteomicsDB" id="67955">
    <molecule id="Q6ZN11-2"/>
</dbReference>
<dbReference type="Antibodypedia" id="29906">
    <property type="antibodies" value="34 antibodies from 11 providers"/>
</dbReference>
<dbReference type="DNASU" id="390927"/>
<dbReference type="Ensembl" id="ENST00000445217.5">
    <molecule id="Q6ZN11-1"/>
    <property type="protein sequence ID" value="ENSP00000396402.1"/>
    <property type="gene ID" value="ENSG00000188227.14"/>
</dbReference>
<dbReference type="Ensembl" id="ENST00000587143.5">
    <molecule id="Q6ZN11-1"/>
    <property type="protein sequence ID" value="ENSP00000468605.1"/>
    <property type="gene ID" value="ENSG00000188227.14"/>
</dbReference>
<dbReference type="Ensembl" id="ENST00000627814.3">
    <molecule id="Q6ZN11-1"/>
    <property type="protein sequence ID" value="ENSP00000487183.2"/>
    <property type="gene ID" value="ENSG00000188227.14"/>
</dbReference>
<dbReference type="GeneID" id="390927"/>
<dbReference type="KEGG" id="hsa:390927"/>
<dbReference type="MANE-Select" id="ENST00000627814.3">
    <property type="protein sequence ID" value="ENSP00000487183.2"/>
    <property type="RefSeq nucleotide sequence ID" value="NM_001013659.3"/>
    <property type="RefSeq protein sequence ID" value="NP_001013681.2"/>
</dbReference>
<dbReference type="UCSC" id="uc010xts.3">
    <molecule id="Q6ZN11-1"/>
    <property type="organism name" value="human"/>
</dbReference>
<dbReference type="AGR" id="HGNC:33115"/>
<dbReference type="CTD" id="390927"/>
<dbReference type="DisGeNET" id="390927"/>
<dbReference type="GeneCards" id="ZNF793"/>
<dbReference type="HGNC" id="HGNC:33115">
    <property type="gene designation" value="ZNF793"/>
</dbReference>
<dbReference type="HPA" id="ENSG00000188227">
    <property type="expression patterns" value="Low tissue specificity"/>
</dbReference>
<dbReference type="neXtProt" id="NX_Q6ZN11"/>
<dbReference type="OpenTargets" id="ENSG00000188227"/>
<dbReference type="PharmGKB" id="PA162410548"/>
<dbReference type="VEuPathDB" id="HostDB:ENSG00000188227"/>
<dbReference type="eggNOG" id="KOG1721">
    <property type="taxonomic scope" value="Eukaryota"/>
</dbReference>
<dbReference type="GeneTree" id="ENSGT00940000163141"/>
<dbReference type="HOGENOM" id="CLU_002678_0_9_1"/>
<dbReference type="InParanoid" id="Q6ZN11"/>
<dbReference type="OMA" id="LGCHCWE"/>
<dbReference type="OrthoDB" id="3437960at2759"/>
<dbReference type="PAN-GO" id="Q6ZN11">
    <property type="GO annotations" value="4 GO annotations based on evolutionary models"/>
</dbReference>
<dbReference type="PhylomeDB" id="Q6ZN11"/>
<dbReference type="TreeFam" id="TF340838"/>
<dbReference type="PathwayCommons" id="Q6ZN11"/>
<dbReference type="Reactome" id="R-HSA-212436">
    <property type="pathway name" value="Generic Transcription Pathway"/>
</dbReference>
<dbReference type="SignaLink" id="Q6ZN11"/>
<dbReference type="BioGRID-ORCS" id="390927">
    <property type="hits" value="12 hits in 1180 CRISPR screens"/>
</dbReference>
<dbReference type="ChiTaRS" id="ZNF793">
    <property type="organism name" value="human"/>
</dbReference>
<dbReference type="GenomeRNAi" id="390927"/>
<dbReference type="Pharos" id="Q6ZN11">
    <property type="development level" value="Tdark"/>
</dbReference>
<dbReference type="PRO" id="PR:Q6ZN11"/>
<dbReference type="Proteomes" id="UP000005640">
    <property type="component" value="Chromosome 19"/>
</dbReference>
<dbReference type="RNAct" id="Q6ZN11">
    <property type="molecule type" value="protein"/>
</dbReference>
<dbReference type="Bgee" id="ENSG00000188227">
    <property type="expression patterns" value="Expressed in cortical plate and 191 other cell types or tissues"/>
</dbReference>
<dbReference type="ExpressionAtlas" id="Q6ZN11">
    <property type="expression patterns" value="baseline and differential"/>
</dbReference>
<dbReference type="GO" id="GO:0005634">
    <property type="term" value="C:nucleus"/>
    <property type="evidence" value="ECO:0000318"/>
    <property type="project" value="GO_Central"/>
</dbReference>
<dbReference type="GO" id="GO:0000981">
    <property type="term" value="F:DNA-binding transcription factor activity, RNA polymerase II-specific"/>
    <property type="evidence" value="ECO:0000318"/>
    <property type="project" value="GO_Central"/>
</dbReference>
<dbReference type="GO" id="GO:0000978">
    <property type="term" value="F:RNA polymerase II cis-regulatory region sequence-specific DNA binding"/>
    <property type="evidence" value="ECO:0000318"/>
    <property type="project" value="GO_Central"/>
</dbReference>
<dbReference type="GO" id="GO:0008270">
    <property type="term" value="F:zinc ion binding"/>
    <property type="evidence" value="ECO:0007669"/>
    <property type="project" value="UniProtKB-KW"/>
</dbReference>
<dbReference type="GO" id="GO:0006357">
    <property type="term" value="P:regulation of transcription by RNA polymerase II"/>
    <property type="evidence" value="ECO:0000318"/>
    <property type="project" value="GO_Central"/>
</dbReference>
<dbReference type="CDD" id="cd07765">
    <property type="entry name" value="KRAB_A-box"/>
    <property type="match status" value="1"/>
</dbReference>
<dbReference type="FunFam" id="3.30.160.60:FF:002716">
    <property type="entry name" value="Zinc finger protein 212"/>
    <property type="match status" value="1"/>
</dbReference>
<dbReference type="FunFam" id="3.30.160.60:FF:000128">
    <property type="entry name" value="zinc finger protein 268 isoform X1"/>
    <property type="match status" value="1"/>
</dbReference>
<dbReference type="FunFam" id="3.30.160.60:FF:002090">
    <property type="entry name" value="Zinc finger protein 473"/>
    <property type="match status" value="1"/>
</dbReference>
<dbReference type="FunFam" id="3.30.160.60:FF:001011">
    <property type="entry name" value="Zinc finger protein 793"/>
    <property type="match status" value="1"/>
</dbReference>
<dbReference type="FunFam" id="3.30.160.60:FF:001157">
    <property type="entry name" value="Zinc finger protein 793"/>
    <property type="match status" value="1"/>
</dbReference>
<dbReference type="FunFam" id="3.30.160.60:FF:003285">
    <property type="entry name" value="Zinc finger protein 793"/>
    <property type="match status" value="1"/>
</dbReference>
<dbReference type="Gene3D" id="6.10.140.140">
    <property type="match status" value="1"/>
</dbReference>
<dbReference type="Gene3D" id="3.30.160.60">
    <property type="entry name" value="Classic Zinc Finger"/>
    <property type="match status" value="6"/>
</dbReference>
<dbReference type="InterPro" id="IPR001909">
    <property type="entry name" value="KRAB"/>
</dbReference>
<dbReference type="InterPro" id="IPR036051">
    <property type="entry name" value="KRAB_dom_sf"/>
</dbReference>
<dbReference type="InterPro" id="IPR036236">
    <property type="entry name" value="Znf_C2H2_sf"/>
</dbReference>
<dbReference type="InterPro" id="IPR013087">
    <property type="entry name" value="Znf_C2H2_type"/>
</dbReference>
<dbReference type="PANTHER" id="PTHR24381:SF455">
    <property type="entry name" value="RB-ASSOCIATED KRAB ZINC FINGER PROTEIN-RELATED"/>
    <property type="match status" value="1"/>
</dbReference>
<dbReference type="PANTHER" id="PTHR24381">
    <property type="entry name" value="ZINC FINGER PROTEIN"/>
    <property type="match status" value="1"/>
</dbReference>
<dbReference type="Pfam" id="PF01352">
    <property type="entry name" value="KRAB"/>
    <property type="match status" value="1"/>
</dbReference>
<dbReference type="Pfam" id="PF00096">
    <property type="entry name" value="zf-C2H2"/>
    <property type="match status" value="6"/>
</dbReference>
<dbReference type="SMART" id="SM00349">
    <property type="entry name" value="KRAB"/>
    <property type="match status" value="1"/>
</dbReference>
<dbReference type="SMART" id="SM00355">
    <property type="entry name" value="ZnF_C2H2"/>
    <property type="match status" value="6"/>
</dbReference>
<dbReference type="SUPFAM" id="SSF57667">
    <property type="entry name" value="beta-beta-alpha zinc fingers"/>
    <property type="match status" value="3"/>
</dbReference>
<dbReference type="SUPFAM" id="SSF109640">
    <property type="entry name" value="KRAB domain (Kruppel-associated box)"/>
    <property type="match status" value="1"/>
</dbReference>
<dbReference type="PROSITE" id="PS50805">
    <property type="entry name" value="KRAB"/>
    <property type="match status" value="1"/>
</dbReference>
<dbReference type="PROSITE" id="PS00028">
    <property type="entry name" value="ZINC_FINGER_C2H2_1"/>
    <property type="match status" value="6"/>
</dbReference>
<dbReference type="PROSITE" id="PS50157">
    <property type="entry name" value="ZINC_FINGER_C2H2_2"/>
    <property type="match status" value="6"/>
</dbReference>
<proteinExistence type="evidence at protein level"/>
<evidence type="ECO:0000255" key="1">
    <source>
        <dbReference type="PROSITE-ProRule" id="PRU00042"/>
    </source>
</evidence>
<evidence type="ECO:0000255" key="2">
    <source>
        <dbReference type="PROSITE-ProRule" id="PRU00119"/>
    </source>
</evidence>
<evidence type="ECO:0000303" key="3">
    <source>
    </source>
</evidence>
<evidence type="ECO:0000303" key="4">
    <source>
    </source>
</evidence>
<evidence type="ECO:0000305" key="5"/>
<keyword id="KW-0025">Alternative splicing</keyword>
<keyword id="KW-0238">DNA-binding</keyword>
<keyword id="KW-0479">Metal-binding</keyword>
<keyword id="KW-0539">Nucleus</keyword>
<keyword id="KW-1267">Proteomics identification</keyword>
<keyword id="KW-1185">Reference proteome</keyword>
<keyword id="KW-0677">Repeat</keyword>
<keyword id="KW-0804">Transcription</keyword>
<keyword id="KW-0805">Transcription regulation</keyword>
<keyword id="KW-0862">Zinc</keyword>
<keyword id="KW-0863">Zinc-finger</keyword>
<comment type="function">
    <text>May be involved in transcriptional regulation.</text>
</comment>
<comment type="interaction">
    <interactant intactId="EBI-5667494">
        <id>Q6ZN11</id>
    </interactant>
    <interactant intactId="EBI-1802965">
        <id>Q96EB6</id>
        <label>SIRT1</label>
    </interactant>
    <organismsDiffer>false</organismsDiffer>
    <experiments>2</experiments>
</comment>
<comment type="subcellular location">
    <subcellularLocation>
        <location evidence="5">Nucleus</location>
    </subcellularLocation>
</comment>
<comment type="alternative products">
    <event type="alternative splicing"/>
    <isoform>
        <id>Q6ZN11-1</id>
        <name>1</name>
        <sequence type="displayed"/>
    </isoform>
    <isoform>
        <id>Q6ZN11-2</id>
        <name>2</name>
        <sequence type="described" ref="VSP_026565"/>
    </isoform>
    <isoform>
        <id>Q6ZN11-3</id>
        <name>3</name>
        <sequence type="described" ref="VSP_026564"/>
    </isoform>
</comment>
<comment type="similarity">
    <text evidence="5">Belongs to the krueppel C2H2-type zinc-finger protein family.</text>
</comment>
<comment type="sequence caution" evidence="5">
    <conflict type="frameshift">
        <sequence resource="EMBL-CDS" id="CAD97772"/>
    </conflict>
</comment>
<organism>
    <name type="scientific">Homo sapiens</name>
    <name type="common">Human</name>
    <dbReference type="NCBI Taxonomy" id="9606"/>
    <lineage>
        <taxon>Eukaryota</taxon>
        <taxon>Metazoa</taxon>
        <taxon>Chordata</taxon>
        <taxon>Craniata</taxon>
        <taxon>Vertebrata</taxon>
        <taxon>Euteleostomi</taxon>
        <taxon>Mammalia</taxon>
        <taxon>Eutheria</taxon>
        <taxon>Euarchontoglires</taxon>
        <taxon>Primates</taxon>
        <taxon>Haplorrhini</taxon>
        <taxon>Catarrhini</taxon>
        <taxon>Hominidae</taxon>
        <taxon>Homo</taxon>
    </lineage>
</organism>
<name>ZN793_HUMAN</name>
<feature type="chain" id="PRO_0000293699" description="Zinc finger protein 793">
    <location>
        <begin position="1"/>
        <end position="406"/>
    </location>
</feature>
<feature type="domain" description="KRAB" evidence="2">
    <location>
        <begin position="8"/>
        <end position="79"/>
    </location>
</feature>
<feature type="zinc finger region" description="C2H2-type 1" evidence="1">
    <location>
        <begin position="227"/>
        <end position="249"/>
    </location>
</feature>
<feature type="zinc finger region" description="C2H2-type 2" evidence="1">
    <location>
        <begin position="255"/>
        <end position="277"/>
    </location>
</feature>
<feature type="zinc finger region" description="C2H2-type 3" evidence="1">
    <location>
        <begin position="283"/>
        <end position="305"/>
    </location>
</feature>
<feature type="zinc finger region" description="C2H2-type 4" evidence="1">
    <location>
        <begin position="311"/>
        <end position="333"/>
    </location>
</feature>
<feature type="zinc finger region" description="C2H2-type 5" evidence="1">
    <location>
        <begin position="339"/>
        <end position="361"/>
    </location>
</feature>
<feature type="zinc finger region" description="C2H2-type 6" evidence="1">
    <location>
        <begin position="367"/>
        <end position="389"/>
    </location>
</feature>
<feature type="splice variant" id="VSP_026564" description="In isoform 3." evidence="4">
    <location>
        <begin position="1"/>
        <end position="94"/>
    </location>
</feature>
<feature type="splice variant" id="VSP_026565" description="In isoform 2." evidence="3">
    <original>TGEKPYGCNECGKAFYQKPNLSRHQKIHARKNAYRNENLIIVGNT</original>
    <variation>FGESSLRSKSSNT</variation>
    <location>
        <begin position="362"/>
        <end position="406"/>
    </location>
</feature>
<feature type="sequence variant" id="VAR_033107" description="In dbSNP:rs12977460.">
    <original>I</original>
    <variation>M</variation>
    <location>
        <position position="68"/>
    </location>
</feature>
<feature type="sequence variant" id="VAR_061967" description="In dbSNP:rs45593644.">
    <original>I</original>
    <variation>V</variation>
    <location>
        <position position="133"/>
    </location>
</feature>
<feature type="sequence conflict" description="In Ref. 1; BAD18564." evidence="5" ref="1">
    <original>V</original>
    <variation>A</variation>
    <location>
        <position position="45"/>
    </location>
</feature>
<sequence>MIEYQIPVSFKDVVVGFTQEEWHRLSPAQRALYRDVMLETYSNLVSVGYEGTKPDVILRLEQEEAPWIGEAACPGCHCWEDIWRVNIQRKRRQDMLLRPGAAISKKTLPKEKSCEYNKFGKISLLSTDLFSSIQSPSNWNPCGKNLNHNLDLIGFKRNCAKKQDECYAYGKLLQRINHGRRPNGEKPRGCSHCEKAFTQNPALMYKPAVSDSLLYKRKRVPPTEKPHVCSECGKAFCYKSEFIRHQRSHTGEKPYGCTDCGKAFSHKSTLIKHQRIHTGVRPFECFFCGKAFTQKSHRTEHQRTHTGERPFVCSECGKSFGEKSYLNVHRKMHTGERPYRCRECGKSFSQKSCLNKHWRTHTGEKPYGCNECGKAFYQKPNLSRHQKIHARKNAYRNENLIIVGNT</sequence>
<reference key="1">
    <citation type="journal article" date="2004" name="Nat. Genet.">
        <title>Complete sequencing and characterization of 21,243 full-length human cDNAs.</title>
        <authorList>
            <person name="Ota T."/>
            <person name="Suzuki Y."/>
            <person name="Nishikawa T."/>
            <person name="Otsuki T."/>
            <person name="Sugiyama T."/>
            <person name="Irie R."/>
            <person name="Wakamatsu A."/>
            <person name="Hayashi K."/>
            <person name="Sato H."/>
            <person name="Nagai K."/>
            <person name="Kimura K."/>
            <person name="Makita H."/>
            <person name="Sekine M."/>
            <person name="Obayashi M."/>
            <person name="Nishi T."/>
            <person name="Shibahara T."/>
            <person name="Tanaka T."/>
            <person name="Ishii S."/>
            <person name="Yamamoto J."/>
            <person name="Saito K."/>
            <person name="Kawai Y."/>
            <person name="Isono Y."/>
            <person name="Nakamura Y."/>
            <person name="Nagahari K."/>
            <person name="Murakami K."/>
            <person name="Yasuda T."/>
            <person name="Iwayanagi T."/>
            <person name="Wagatsuma M."/>
            <person name="Shiratori A."/>
            <person name="Sudo H."/>
            <person name="Hosoiri T."/>
            <person name="Kaku Y."/>
            <person name="Kodaira H."/>
            <person name="Kondo H."/>
            <person name="Sugawara M."/>
            <person name="Takahashi M."/>
            <person name="Kanda K."/>
            <person name="Yokoi T."/>
            <person name="Furuya T."/>
            <person name="Kikkawa E."/>
            <person name="Omura Y."/>
            <person name="Abe K."/>
            <person name="Kamihara K."/>
            <person name="Katsuta N."/>
            <person name="Sato K."/>
            <person name="Tanikawa M."/>
            <person name="Yamazaki M."/>
            <person name="Ninomiya K."/>
            <person name="Ishibashi T."/>
            <person name="Yamashita H."/>
            <person name="Murakawa K."/>
            <person name="Fujimori K."/>
            <person name="Tanai H."/>
            <person name="Kimata M."/>
            <person name="Watanabe M."/>
            <person name="Hiraoka S."/>
            <person name="Chiba Y."/>
            <person name="Ishida S."/>
            <person name="Ono Y."/>
            <person name="Takiguchi S."/>
            <person name="Watanabe S."/>
            <person name="Yosida M."/>
            <person name="Hotuta T."/>
            <person name="Kusano J."/>
            <person name="Kanehori K."/>
            <person name="Takahashi-Fujii A."/>
            <person name="Hara H."/>
            <person name="Tanase T.-O."/>
            <person name="Nomura Y."/>
            <person name="Togiya S."/>
            <person name="Komai F."/>
            <person name="Hara R."/>
            <person name="Takeuchi K."/>
            <person name="Arita M."/>
            <person name="Imose N."/>
            <person name="Musashino K."/>
            <person name="Yuuki H."/>
            <person name="Oshima A."/>
            <person name="Sasaki N."/>
            <person name="Aotsuka S."/>
            <person name="Yoshikawa Y."/>
            <person name="Matsunawa H."/>
            <person name="Ichihara T."/>
            <person name="Shiohata N."/>
            <person name="Sano S."/>
            <person name="Moriya S."/>
            <person name="Momiyama H."/>
            <person name="Satoh N."/>
            <person name="Takami S."/>
            <person name="Terashima Y."/>
            <person name="Suzuki O."/>
            <person name="Nakagawa S."/>
            <person name="Senoh A."/>
            <person name="Mizoguchi H."/>
            <person name="Goto Y."/>
            <person name="Shimizu F."/>
            <person name="Wakebe H."/>
            <person name="Hishigaki H."/>
            <person name="Watanabe T."/>
            <person name="Sugiyama A."/>
            <person name="Takemoto M."/>
            <person name="Kawakami B."/>
            <person name="Yamazaki M."/>
            <person name="Watanabe K."/>
            <person name="Kumagai A."/>
            <person name="Itakura S."/>
            <person name="Fukuzumi Y."/>
            <person name="Fujimori Y."/>
            <person name="Komiyama M."/>
            <person name="Tashiro H."/>
            <person name="Tanigami A."/>
            <person name="Fujiwara T."/>
            <person name="Ono T."/>
            <person name="Yamada K."/>
            <person name="Fujii Y."/>
            <person name="Ozaki K."/>
            <person name="Hirao M."/>
            <person name="Ohmori Y."/>
            <person name="Kawabata A."/>
            <person name="Hikiji T."/>
            <person name="Kobatake N."/>
            <person name="Inagaki H."/>
            <person name="Ikema Y."/>
            <person name="Okamoto S."/>
            <person name="Okitani R."/>
            <person name="Kawakami T."/>
            <person name="Noguchi S."/>
            <person name="Itoh T."/>
            <person name="Shigeta K."/>
            <person name="Senba T."/>
            <person name="Matsumura K."/>
            <person name="Nakajima Y."/>
            <person name="Mizuno T."/>
            <person name="Morinaga M."/>
            <person name="Sasaki M."/>
            <person name="Togashi T."/>
            <person name="Oyama M."/>
            <person name="Hata H."/>
            <person name="Watanabe M."/>
            <person name="Komatsu T."/>
            <person name="Mizushima-Sugano J."/>
            <person name="Satoh T."/>
            <person name="Shirai Y."/>
            <person name="Takahashi Y."/>
            <person name="Nakagawa K."/>
            <person name="Okumura K."/>
            <person name="Nagase T."/>
            <person name="Nomura N."/>
            <person name="Kikuchi H."/>
            <person name="Masuho Y."/>
            <person name="Yamashita R."/>
            <person name="Nakai K."/>
            <person name="Yada T."/>
            <person name="Nakamura Y."/>
            <person name="Ohara O."/>
            <person name="Isogai T."/>
            <person name="Sugano S."/>
        </authorList>
    </citation>
    <scope>NUCLEOTIDE SEQUENCE [LARGE SCALE MRNA] (ISOFORM 2)</scope>
    <source>
        <tissue>Brain</tissue>
    </source>
</reference>
<reference key="2">
    <citation type="journal article" date="2004" name="Nature">
        <title>The DNA sequence and biology of human chromosome 19.</title>
        <authorList>
            <person name="Grimwood J."/>
            <person name="Gordon L.A."/>
            <person name="Olsen A.S."/>
            <person name="Terry A."/>
            <person name="Schmutz J."/>
            <person name="Lamerdin J.E."/>
            <person name="Hellsten U."/>
            <person name="Goodstein D."/>
            <person name="Couronne O."/>
            <person name="Tran-Gyamfi M."/>
            <person name="Aerts A."/>
            <person name="Altherr M."/>
            <person name="Ashworth L."/>
            <person name="Bajorek E."/>
            <person name="Black S."/>
            <person name="Branscomb E."/>
            <person name="Caenepeel S."/>
            <person name="Carrano A.V."/>
            <person name="Caoile C."/>
            <person name="Chan Y.M."/>
            <person name="Christensen M."/>
            <person name="Cleland C.A."/>
            <person name="Copeland A."/>
            <person name="Dalin E."/>
            <person name="Dehal P."/>
            <person name="Denys M."/>
            <person name="Detter J.C."/>
            <person name="Escobar J."/>
            <person name="Flowers D."/>
            <person name="Fotopulos D."/>
            <person name="Garcia C."/>
            <person name="Georgescu A.M."/>
            <person name="Glavina T."/>
            <person name="Gomez M."/>
            <person name="Gonzales E."/>
            <person name="Groza M."/>
            <person name="Hammon N."/>
            <person name="Hawkins T."/>
            <person name="Haydu L."/>
            <person name="Ho I."/>
            <person name="Huang W."/>
            <person name="Israni S."/>
            <person name="Jett J."/>
            <person name="Kadner K."/>
            <person name="Kimball H."/>
            <person name="Kobayashi A."/>
            <person name="Larionov V."/>
            <person name="Leem S.-H."/>
            <person name="Lopez F."/>
            <person name="Lou Y."/>
            <person name="Lowry S."/>
            <person name="Malfatti S."/>
            <person name="Martinez D."/>
            <person name="McCready P.M."/>
            <person name="Medina C."/>
            <person name="Morgan J."/>
            <person name="Nelson K."/>
            <person name="Nolan M."/>
            <person name="Ovcharenko I."/>
            <person name="Pitluck S."/>
            <person name="Pollard M."/>
            <person name="Popkie A.P."/>
            <person name="Predki P."/>
            <person name="Quan G."/>
            <person name="Ramirez L."/>
            <person name="Rash S."/>
            <person name="Retterer J."/>
            <person name="Rodriguez A."/>
            <person name="Rogers S."/>
            <person name="Salamov A."/>
            <person name="Salazar A."/>
            <person name="She X."/>
            <person name="Smith D."/>
            <person name="Slezak T."/>
            <person name="Solovyev V."/>
            <person name="Thayer N."/>
            <person name="Tice H."/>
            <person name="Tsai M."/>
            <person name="Ustaszewska A."/>
            <person name="Vo N."/>
            <person name="Wagner M."/>
            <person name="Wheeler J."/>
            <person name="Wu K."/>
            <person name="Xie G."/>
            <person name="Yang J."/>
            <person name="Dubchak I."/>
            <person name="Furey T.S."/>
            <person name="DeJong P."/>
            <person name="Dickson M."/>
            <person name="Gordon D."/>
            <person name="Eichler E.E."/>
            <person name="Pennacchio L.A."/>
            <person name="Richardson P."/>
            <person name="Stubbs L."/>
            <person name="Rokhsar D.S."/>
            <person name="Myers R.M."/>
            <person name="Rubin E.M."/>
            <person name="Lucas S.M."/>
        </authorList>
    </citation>
    <scope>NUCLEOTIDE SEQUENCE [LARGE SCALE GENOMIC DNA]</scope>
</reference>
<reference key="3">
    <citation type="journal article" date="2007" name="BMC Genomics">
        <title>The full-ORF clone resource of the German cDNA consortium.</title>
        <authorList>
            <person name="Bechtel S."/>
            <person name="Rosenfelder H."/>
            <person name="Duda A."/>
            <person name="Schmidt C.P."/>
            <person name="Ernst U."/>
            <person name="Wellenreuther R."/>
            <person name="Mehrle A."/>
            <person name="Schuster C."/>
            <person name="Bahr A."/>
            <person name="Bloecker H."/>
            <person name="Heubner D."/>
            <person name="Hoerlein A."/>
            <person name="Michel G."/>
            <person name="Wedler H."/>
            <person name="Koehrer K."/>
            <person name="Ottenwaelder B."/>
            <person name="Poustka A."/>
            <person name="Wiemann S."/>
            <person name="Schupp I."/>
        </authorList>
    </citation>
    <scope>NUCLEOTIDE SEQUENCE [LARGE SCALE MRNA] (ISOFORM 3)</scope>
    <source>
        <tissue>Retina</tissue>
    </source>
</reference>
<gene>
    <name type="primary">ZNF793</name>
</gene>
<accession>Q6ZN11</accession>
<accession>E9PGN4</accession>
<accession>Q7Z3Q9</accession>